<feature type="chain" id="PRO_1000166631" description="NADH-quinone oxidoreductase subunit H">
    <location>
        <begin position="1"/>
        <end position="325"/>
    </location>
</feature>
<feature type="transmembrane region" description="Helical" evidence="1">
    <location>
        <begin position="11"/>
        <end position="31"/>
    </location>
</feature>
<feature type="transmembrane region" description="Helical" evidence="1">
    <location>
        <begin position="50"/>
        <end position="69"/>
    </location>
</feature>
<feature type="transmembrane region" description="Helical" evidence="1">
    <location>
        <begin position="81"/>
        <end position="101"/>
    </location>
</feature>
<feature type="transmembrane region" description="Helical" evidence="1">
    <location>
        <begin position="114"/>
        <end position="134"/>
    </location>
</feature>
<feature type="transmembrane region" description="Helical" evidence="1">
    <location>
        <begin position="154"/>
        <end position="174"/>
    </location>
</feature>
<feature type="transmembrane region" description="Helical" evidence="1">
    <location>
        <begin position="186"/>
        <end position="206"/>
    </location>
</feature>
<feature type="transmembrane region" description="Helical" evidence="1">
    <location>
        <begin position="237"/>
        <end position="257"/>
    </location>
</feature>
<feature type="transmembrane region" description="Helical" evidence="1">
    <location>
        <begin position="265"/>
        <end position="285"/>
    </location>
</feature>
<feature type="transmembrane region" description="Helical" evidence="1">
    <location>
        <begin position="304"/>
        <end position="324"/>
    </location>
</feature>
<keyword id="KW-0997">Cell inner membrane</keyword>
<keyword id="KW-1003">Cell membrane</keyword>
<keyword id="KW-0472">Membrane</keyword>
<keyword id="KW-0520">NAD</keyword>
<keyword id="KW-0874">Quinone</keyword>
<keyword id="KW-1278">Translocase</keyword>
<keyword id="KW-0812">Transmembrane</keyword>
<keyword id="KW-1133">Transmembrane helix</keyword>
<keyword id="KW-0830">Ubiquinone</keyword>
<organism>
    <name type="scientific">Salmonella paratyphi C (strain RKS4594)</name>
    <dbReference type="NCBI Taxonomy" id="476213"/>
    <lineage>
        <taxon>Bacteria</taxon>
        <taxon>Pseudomonadati</taxon>
        <taxon>Pseudomonadota</taxon>
        <taxon>Gammaproteobacteria</taxon>
        <taxon>Enterobacterales</taxon>
        <taxon>Enterobacteriaceae</taxon>
        <taxon>Salmonella</taxon>
    </lineage>
</organism>
<reference key="1">
    <citation type="journal article" date="2009" name="PLoS ONE">
        <title>Salmonella paratyphi C: genetic divergence from Salmonella choleraesuis and pathogenic convergence with Salmonella typhi.</title>
        <authorList>
            <person name="Liu W.-Q."/>
            <person name="Feng Y."/>
            <person name="Wang Y."/>
            <person name="Zou Q.-H."/>
            <person name="Chen F."/>
            <person name="Guo J.-T."/>
            <person name="Peng Y.-H."/>
            <person name="Jin Y."/>
            <person name="Li Y.-G."/>
            <person name="Hu S.-N."/>
            <person name="Johnston R.N."/>
            <person name="Liu G.-R."/>
            <person name="Liu S.-L."/>
        </authorList>
    </citation>
    <scope>NUCLEOTIDE SEQUENCE [LARGE SCALE GENOMIC DNA]</scope>
    <source>
        <strain>RKS4594</strain>
    </source>
</reference>
<protein>
    <recommendedName>
        <fullName evidence="1">NADH-quinone oxidoreductase subunit H</fullName>
        <ecNumber evidence="1">7.1.1.-</ecNumber>
    </recommendedName>
    <alternativeName>
        <fullName evidence="1">NADH dehydrogenase I subunit H</fullName>
    </alternativeName>
    <alternativeName>
        <fullName evidence="1">NDH-1 subunit H</fullName>
    </alternativeName>
</protein>
<dbReference type="EC" id="7.1.1.-" evidence="1"/>
<dbReference type="EMBL" id="CP000857">
    <property type="protein sequence ID" value="ACN45549.1"/>
    <property type="molecule type" value="Genomic_DNA"/>
</dbReference>
<dbReference type="RefSeq" id="WP_000118515.1">
    <property type="nucleotide sequence ID" value="NC_012125.1"/>
</dbReference>
<dbReference type="SMR" id="C0Q045"/>
<dbReference type="GeneID" id="66756771"/>
<dbReference type="KEGG" id="sei:SPC_1387"/>
<dbReference type="HOGENOM" id="CLU_015134_0_1_6"/>
<dbReference type="Proteomes" id="UP000001599">
    <property type="component" value="Chromosome"/>
</dbReference>
<dbReference type="GO" id="GO:0005886">
    <property type="term" value="C:plasma membrane"/>
    <property type="evidence" value="ECO:0007669"/>
    <property type="project" value="UniProtKB-SubCell"/>
</dbReference>
<dbReference type="GO" id="GO:0003954">
    <property type="term" value="F:NADH dehydrogenase activity"/>
    <property type="evidence" value="ECO:0007669"/>
    <property type="project" value="TreeGrafter"/>
</dbReference>
<dbReference type="GO" id="GO:0016655">
    <property type="term" value="F:oxidoreductase activity, acting on NAD(P)H, quinone or similar compound as acceptor"/>
    <property type="evidence" value="ECO:0007669"/>
    <property type="project" value="UniProtKB-UniRule"/>
</dbReference>
<dbReference type="GO" id="GO:0048038">
    <property type="term" value="F:quinone binding"/>
    <property type="evidence" value="ECO:0007669"/>
    <property type="project" value="UniProtKB-KW"/>
</dbReference>
<dbReference type="GO" id="GO:0009060">
    <property type="term" value="P:aerobic respiration"/>
    <property type="evidence" value="ECO:0007669"/>
    <property type="project" value="TreeGrafter"/>
</dbReference>
<dbReference type="HAMAP" id="MF_01350">
    <property type="entry name" value="NDH1_NuoH"/>
    <property type="match status" value="1"/>
</dbReference>
<dbReference type="InterPro" id="IPR001694">
    <property type="entry name" value="NADH_UbQ_OxRdtase_su1/FPO"/>
</dbReference>
<dbReference type="InterPro" id="IPR018086">
    <property type="entry name" value="NADH_UbQ_OxRdtase_su1_CS"/>
</dbReference>
<dbReference type="NCBIfam" id="NF004740">
    <property type="entry name" value="PRK06076.1-1"/>
    <property type="match status" value="1"/>
</dbReference>
<dbReference type="NCBIfam" id="NF004741">
    <property type="entry name" value="PRK06076.1-2"/>
    <property type="match status" value="1"/>
</dbReference>
<dbReference type="PANTHER" id="PTHR11432">
    <property type="entry name" value="NADH DEHYDROGENASE SUBUNIT 1"/>
    <property type="match status" value="1"/>
</dbReference>
<dbReference type="PANTHER" id="PTHR11432:SF3">
    <property type="entry name" value="NADH-UBIQUINONE OXIDOREDUCTASE CHAIN 1"/>
    <property type="match status" value="1"/>
</dbReference>
<dbReference type="Pfam" id="PF00146">
    <property type="entry name" value="NADHdh"/>
    <property type="match status" value="1"/>
</dbReference>
<dbReference type="PROSITE" id="PS00667">
    <property type="entry name" value="COMPLEX1_ND1_1"/>
    <property type="match status" value="1"/>
</dbReference>
<dbReference type="PROSITE" id="PS00668">
    <property type="entry name" value="COMPLEX1_ND1_2"/>
    <property type="match status" value="1"/>
</dbReference>
<comment type="function">
    <text evidence="1">NDH-1 shuttles electrons from NADH, via FMN and iron-sulfur (Fe-S) centers, to quinones in the respiratory chain. The immediate electron acceptor for the enzyme in this species is believed to be ubiquinone. Couples the redox reaction to proton translocation (for every two electrons transferred, four hydrogen ions are translocated across the cytoplasmic membrane), and thus conserves the redox energy in a proton gradient. This subunit may bind ubiquinone.</text>
</comment>
<comment type="catalytic activity">
    <reaction evidence="1">
        <text>a quinone + NADH + 5 H(+)(in) = a quinol + NAD(+) + 4 H(+)(out)</text>
        <dbReference type="Rhea" id="RHEA:57888"/>
        <dbReference type="ChEBI" id="CHEBI:15378"/>
        <dbReference type="ChEBI" id="CHEBI:24646"/>
        <dbReference type="ChEBI" id="CHEBI:57540"/>
        <dbReference type="ChEBI" id="CHEBI:57945"/>
        <dbReference type="ChEBI" id="CHEBI:132124"/>
    </reaction>
</comment>
<comment type="subunit">
    <text evidence="1">NDH-1 is composed of 13 different subunits. Subunits NuoA, H, J, K, L, M, N constitute the membrane sector of the complex.</text>
</comment>
<comment type="subcellular location">
    <subcellularLocation>
        <location evidence="1">Cell inner membrane</location>
        <topology evidence="1">Multi-pass membrane protein</topology>
    </subcellularLocation>
</comment>
<comment type="similarity">
    <text evidence="1">Belongs to the complex I subunit 1 family.</text>
</comment>
<gene>
    <name evidence="1" type="primary">nuoH</name>
    <name type="ordered locus">SPC_1387</name>
</gene>
<evidence type="ECO:0000255" key="1">
    <source>
        <dbReference type="HAMAP-Rule" id="MF_01350"/>
    </source>
</evidence>
<proteinExistence type="inferred from homology"/>
<sequence>MSWITPDLIEILLSILKAVVILLVVVTCGAFMSFGERRLLGLFQNRYGPNRVGWGGSLQLVADMIKMFFKEDWIPKFSDRVIFTLAPMIAFTSLLLSFAIVPVSPNWVVADLNIGILFFLMMAGLAVYAVLFAGWSSNNKYSLLGAMRASAQTVSYEVFLGLSLMGVVAQAGSFNMTDIVNNQAHLWNVIPQFFGFVTFAIAGVAVCHRHPFDQPEAEQELADGYHIEYSGMKFGLFFVGEYIGIVTVSALMVTLFFGGWHGPFLPPFVWFALKTAFFMMMFILIRASLPRPRYDQVMSFGWKVCLPLTLINLLVTAAVILWQAQ</sequence>
<accession>C0Q045</accession>
<name>NUOH_SALPC</name>